<accession>Q8XGC2</accession>
<accession>Q7AM17</accession>
<organism>
    <name type="scientific">Salmonella typhi</name>
    <dbReference type="NCBI Taxonomy" id="90370"/>
    <lineage>
        <taxon>Bacteria</taxon>
        <taxon>Pseudomonadati</taxon>
        <taxon>Pseudomonadota</taxon>
        <taxon>Gammaproteobacteria</taxon>
        <taxon>Enterobacterales</taxon>
        <taxon>Enterobacteriaceae</taxon>
        <taxon>Salmonella</taxon>
    </lineage>
</organism>
<comment type="function">
    <text evidence="1">Key component of the proton channel; it plays a direct role in the translocation of protons across the membrane.</text>
</comment>
<comment type="subunit">
    <text evidence="1">F-type ATPases have 2 components, CF(1) - the catalytic core - and CF(0) - the membrane proton channel. CF(1) has five subunits: alpha(3), beta(3), gamma(1), delta(1), epsilon(1). CF(0) has three main subunits: a(1), b(2) and c(9-12). The alpha and beta chains form an alternating ring which encloses part of the gamma chain. CF(1) is attached to CF(0) by a central stalk formed by the gamma and epsilon chains, while a peripheral stalk is formed by the delta and b chains.</text>
</comment>
<comment type="subcellular location">
    <subcellularLocation>
        <location evidence="1">Cell inner membrane</location>
        <topology evidence="1">Multi-pass membrane protein</topology>
    </subcellularLocation>
</comment>
<comment type="similarity">
    <text evidence="1">Belongs to the ATPase A chain family.</text>
</comment>
<dbReference type="EMBL" id="AE014613">
    <property type="protein sequence ID" value="AAO71145.1"/>
    <property type="molecule type" value="Genomic_DNA"/>
</dbReference>
<dbReference type="EMBL" id="AL513382">
    <property type="protein sequence ID" value="CAD03124.1"/>
    <property type="molecule type" value="Genomic_DNA"/>
</dbReference>
<dbReference type="RefSeq" id="NP_458072.1">
    <property type="nucleotide sequence ID" value="NC_003198.1"/>
</dbReference>
<dbReference type="RefSeq" id="WP_000135632.1">
    <property type="nucleotide sequence ID" value="NZ_WSUR01000023.1"/>
</dbReference>
<dbReference type="SMR" id="Q8XGC2"/>
<dbReference type="STRING" id="220341.gene:17587767"/>
<dbReference type="KEGG" id="stt:t3648"/>
<dbReference type="KEGG" id="sty:STY3907"/>
<dbReference type="PATRIC" id="fig|220341.7.peg.3987"/>
<dbReference type="eggNOG" id="COG0356">
    <property type="taxonomic scope" value="Bacteria"/>
</dbReference>
<dbReference type="HOGENOM" id="CLU_041018_1_0_6"/>
<dbReference type="OMA" id="GFFWAAF"/>
<dbReference type="OrthoDB" id="9789241at2"/>
<dbReference type="Proteomes" id="UP000000541">
    <property type="component" value="Chromosome"/>
</dbReference>
<dbReference type="Proteomes" id="UP000002670">
    <property type="component" value="Chromosome"/>
</dbReference>
<dbReference type="GO" id="GO:0005886">
    <property type="term" value="C:plasma membrane"/>
    <property type="evidence" value="ECO:0007669"/>
    <property type="project" value="UniProtKB-SubCell"/>
</dbReference>
<dbReference type="GO" id="GO:0045259">
    <property type="term" value="C:proton-transporting ATP synthase complex"/>
    <property type="evidence" value="ECO:0007669"/>
    <property type="project" value="UniProtKB-KW"/>
</dbReference>
<dbReference type="GO" id="GO:0046933">
    <property type="term" value="F:proton-transporting ATP synthase activity, rotational mechanism"/>
    <property type="evidence" value="ECO:0007669"/>
    <property type="project" value="UniProtKB-UniRule"/>
</dbReference>
<dbReference type="GO" id="GO:0042777">
    <property type="term" value="P:proton motive force-driven plasma membrane ATP synthesis"/>
    <property type="evidence" value="ECO:0007669"/>
    <property type="project" value="TreeGrafter"/>
</dbReference>
<dbReference type="CDD" id="cd00310">
    <property type="entry name" value="ATP-synt_Fo_a_6"/>
    <property type="match status" value="1"/>
</dbReference>
<dbReference type="FunFam" id="1.20.120.220:FF:000002">
    <property type="entry name" value="ATP synthase subunit a"/>
    <property type="match status" value="1"/>
</dbReference>
<dbReference type="Gene3D" id="1.20.120.220">
    <property type="entry name" value="ATP synthase, F0 complex, subunit A"/>
    <property type="match status" value="1"/>
</dbReference>
<dbReference type="HAMAP" id="MF_01393">
    <property type="entry name" value="ATP_synth_a_bact"/>
    <property type="match status" value="1"/>
</dbReference>
<dbReference type="InterPro" id="IPR045082">
    <property type="entry name" value="ATP_syn_F0_a_bact/chloroplast"/>
</dbReference>
<dbReference type="InterPro" id="IPR000568">
    <property type="entry name" value="ATP_synth_F0_asu"/>
</dbReference>
<dbReference type="InterPro" id="IPR023011">
    <property type="entry name" value="ATP_synth_F0_asu_AS"/>
</dbReference>
<dbReference type="InterPro" id="IPR035908">
    <property type="entry name" value="F0_ATP_A_sf"/>
</dbReference>
<dbReference type="NCBIfam" id="TIGR01131">
    <property type="entry name" value="ATP_synt_6_or_A"/>
    <property type="match status" value="1"/>
</dbReference>
<dbReference type="NCBIfam" id="NF004477">
    <property type="entry name" value="PRK05815.1-1"/>
    <property type="match status" value="1"/>
</dbReference>
<dbReference type="PANTHER" id="PTHR42823">
    <property type="entry name" value="ATP SYNTHASE SUBUNIT A, CHLOROPLASTIC"/>
    <property type="match status" value="1"/>
</dbReference>
<dbReference type="PANTHER" id="PTHR42823:SF3">
    <property type="entry name" value="ATP SYNTHASE SUBUNIT A, CHLOROPLASTIC"/>
    <property type="match status" value="1"/>
</dbReference>
<dbReference type="Pfam" id="PF00119">
    <property type="entry name" value="ATP-synt_A"/>
    <property type="match status" value="1"/>
</dbReference>
<dbReference type="PRINTS" id="PR00123">
    <property type="entry name" value="ATPASEA"/>
</dbReference>
<dbReference type="SUPFAM" id="SSF81336">
    <property type="entry name" value="F1F0 ATP synthase subunit A"/>
    <property type="match status" value="1"/>
</dbReference>
<dbReference type="PROSITE" id="PS00449">
    <property type="entry name" value="ATPASE_A"/>
    <property type="match status" value="1"/>
</dbReference>
<protein>
    <recommendedName>
        <fullName evidence="1">ATP synthase subunit a</fullName>
    </recommendedName>
    <alternativeName>
        <fullName evidence="1">ATP synthase F0 sector subunit a</fullName>
    </alternativeName>
    <alternativeName>
        <fullName evidence="1">F-ATPase subunit 6</fullName>
    </alternativeName>
</protein>
<proteinExistence type="inferred from homology"/>
<gene>
    <name evidence="1" type="primary">atpB</name>
    <name type="ordered locus">STY3907</name>
    <name type="ordered locus">t3648</name>
</gene>
<keyword id="KW-0066">ATP synthesis</keyword>
<keyword id="KW-0997">Cell inner membrane</keyword>
<keyword id="KW-1003">Cell membrane</keyword>
<keyword id="KW-0138">CF(0)</keyword>
<keyword id="KW-0375">Hydrogen ion transport</keyword>
<keyword id="KW-0406">Ion transport</keyword>
<keyword id="KW-0472">Membrane</keyword>
<keyword id="KW-0812">Transmembrane</keyword>
<keyword id="KW-1133">Transmembrane helix</keyword>
<keyword id="KW-0813">Transport</keyword>
<sequence>MASENMTPQEYIGHHLNNLQLDLRTFSLVDPQNPPATFWTLNIDSMFFSVVLGLLFLVMFRSVAKKATSGVPGKFQTAIELIVGFVHGSVKDMYHGKSKLIAPLALTIFVWVFLMNLMDLLPIDLLPYIAEHWLGLPATRVVPSADVNITLSMALGVFILILFYSIKMKGIGGFAKELTLQPFNHWAFIPVNLILEGVSLLSKPVSLGLRLFGNMYAGELIFILIAGLLPWWSQWILNVPWAIFHILIITLQAFIFMVLTIVYLSMASEEH</sequence>
<feature type="chain" id="PRO_0000362444" description="ATP synthase subunit a">
    <location>
        <begin position="1"/>
        <end position="271"/>
    </location>
</feature>
<feature type="transmembrane region" description="Helical" evidence="1">
    <location>
        <begin position="38"/>
        <end position="58"/>
    </location>
</feature>
<feature type="transmembrane region" description="Helical" evidence="1">
    <location>
        <begin position="100"/>
        <end position="120"/>
    </location>
</feature>
<feature type="transmembrane region" description="Helical" evidence="1">
    <location>
        <begin position="146"/>
        <end position="166"/>
    </location>
</feature>
<feature type="transmembrane region" description="Helical" evidence="1">
    <location>
        <begin position="220"/>
        <end position="240"/>
    </location>
</feature>
<feature type="transmembrane region" description="Helical" evidence="1">
    <location>
        <begin position="242"/>
        <end position="262"/>
    </location>
</feature>
<reference key="1">
    <citation type="journal article" date="2003" name="J. Bacteriol.">
        <title>Comparative genomics of Salmonella enterica serovar Typhi strains Ty2 and CT18.</title>
        <authorList>
            <person name="Deng W."/>
            <person name="Liou S.-R."/>
            <person name="Plunkett G. III"/>
            <person name="Mayhew G.F."/>
            <person name="Rose D.J."/>
            <person name="Burland V."/>
            <person name="Kodoyianni V."/>
            <person name="Schwartz D.C."/>
            <person name="Blattner F.R."/>
        </authorList>
    </citation>
    <scope>NUCLEOTIDE SEQUENCE [LARGE SCALE GENOMIC DNA]</scope>
    <source>
        <strain>ATCC 700931 / Ty2</strain>
    </source>
</reference>
<reference key="2">
    <citation type="journal article" date="2001" name="Nature">
        <title>Complete genome sequence of a multiple drug resistant Salmonella enterica serovar Typhi CT18.</title>
        <authorList>
            <person name="Parkhill J."/>
            <person name="Dougan G."/>
            <person name="James K.D."/>
            <person name="Thomson N.R."/>
            <person name="Pickard D."/>
            <person name="Wain J."/>
            <person name="Churcher C.M."/>
            <person name="Mungall K.L."/>
            <person name="Bentley S.D."/>
            <person name="Holden M.T.G."/>
            <person name="Sebaihia M."/>
            <person name="Baker S."/>
            <person name="Basham D."/>
            <person name="Brooks K."/>
            <person name="Chillingworth T."/>
            <person name="Connerton P."/>
            <person name="Cronin A."/>
            <person name="Davis P."/>
            <person name="Davies R.M."/>
            <person name="Dowd L."/>
            <person name="White N."/>
            <person name="Farrar J."/>
            <person name="Feltwell T."/>
            <person name="Hamlin N."/>
            <person name="Haque A."/>
            <person name="Hien T.T."/>
            <person name="Holroyd S."/>
            <person name="Jagels K."/>
            <person name="Krogh A."/>
            <person name="Larsen T.S."/>
            <person name="Leather S."/>
            <person name="Moule S."/>
            <person name="O'Gaora P."/>
            <person name="Parry C."/>
            <person name="Quail M.A."/>
            <person name="Rutherford K.M."/>
            <person name="Simmonds M."/>
            <person name="Skelton J."/>
            <person name="Stevens K."/>
            <person name="Whitehead S."/>
            <person name="Barrell B.G."/>
        </authorList>
    </citation>
    <scope>NUCLEOTIDE SEQUENCE [LARGE SCALE GENOMIC DNA]</scope>
    <source>
        <strain>CT18</strain>
    </source>
</reference>
<name>ATP6_SALTI</name>
<evidence type="ECO:0000255" key="1">
    <source>
        <dbReference type="HAMAP-Rule" id="MF_01393"/>
    </source>
</evidence>